<comment type="function">
    <text evidence="1">Methyltransferase required for the conversion of demethylmenaquinol (DMKH2) to menaquinol (MKH2).</text>
</comment>
<comment type="catalytic activity">
    <reaction evidence="1">
        <text>a 2-demethylmenaquinol + S-adenosyl-L-methionine = a menaquinol + S-adenosyl-L-homocysteine + H(+)</text>
        <dbReference type="Rhea" id="RHEA:42640"/>
        <dbReference type="Rhea" id="RHEA-COMP:9539"/>
        <dbReference type="Rhea" id="RHEA-COMP:9563"/>
        <dbReference type="ChEBI" id="CHEBI:15378"/>
        <dbReference type="ChEBI" id="CHEBI:18151"/>
        <dbReference type="ChEBI" id="CHEBI:55437"/>
        <dbReference type="ChEBI" id="CHEBI:57856"/>
        <dbReference type="ChEBI" id="CHEBI:59789"/>
        <dbReference type="EC" id="2.1.1.163"/>
    </reaction>
</comment>
<comment type="pathway">
    <text evidence="1">Quinol/quinone metabolism; menaquinone biosynthesis; menaquinol from 1,4-dihydroxy-2-naphthoate: step 2/2.</text>
</comment>
<comment type="similarity">
    <text evidence="1">Belongs to the class I-like SAM-binding methyltransferase superfamily. MenG/UbiE family.</text>
</comment>
<keyword id="KW-0474">Menaquinone biosynthesis</keyword>
<keyword id="KW-0489">Methyltransferase</keyword>
<keyword id="KW-0949">S-adenosyl-L-methionine</keyword>
<keyword id="KW-0808">Transferase</keyword>
<dbReference type="EC" id="2.1.1.163" evidence="1"/>
<dbReference type="EMBL" id="CP000903">
    <property type="protein sequence ID" value="ABY42684.1"/>
    <property type="molecule type" value="Genomic_DNA"/>
</dbReference>
<dbReference type="RefSeq" id="WP_002141031.1">
    <property type="nucleotide sequence ID" value="NC_010184.1"/>
</dbReference>
<dbReference type="SMR" id="A9VMC2"/>
<dbReference type="KEGG" id="bwe:BcerKBAB4_1437"/>
<dbReference type="eggNOG" id="COG2226">
    <property type="taxonomic scope" value="Bacteria"/>
</dbReference>
<dbReference type="HOGENOM" id="CLU_037990_0_0_9"/>
<dbReference type="UniPathway" id="UPA00079">
    <property type="reaction ID" value="UER00169"/>
</dbReference>
<dbReference type="Proteomes" id="UP000002154">
    <property type="component" value="Chromosome"/>
</dbReference>
<dbReference type="GO" id="GO:0043770">
    <property type="term" value="F:demethylmenaquinone methyltransferase activity"/>
    <property type="evidence" value="ECO:0007669"/>
    <property type="project" value="UniProtKB-UniRule"/>
</dbReference>
<dbReference type="GO" id="GO:0009234">
    <property type="term" value="P:menaquinone biosynthetic process"/>
    <property type="evidence" value="ECO:0007669"/>
    <property type="project" value="UniProtKB-UniRule"/>
</dbReference>
<dbReference type="GO" id="GO:0032259">
    <property type="term" value="P:methylation"/>
    <property type="evidence" value="ECO:0007669"/>
    <property type="project" value="UniProtKB-KW"/>
</dbReference>
<dbReference type="CDD" id="cd02440">
    <property type="entry name" value="AdoMet_MTases"/>
    <property type="match status" value="1"/>
</dbReference>
<dbReference type="FunFam" id="3.40.50.150:FF:000086">
    <property type="entry name" value="Demethylmenaquinone methyltransferase"/>
    <property type="match status" value="1"/>
</dbReference>
<dbReference type="Gene3D" id="3.40.50.150">
    <property type="entry name" value="Vaccinia Virus protein VP39"/>
    <property type="match status" value="1"/>
</dbReference>
<dbReference type="HAMAP" id="MF_01813">
    <property type="entry name" value="MenG_UbiE_methyltr"/>
    <property type="match status" value="1"/>
</dbReference>
<dbReference type="InterPro" id="IPR014122">
    <property type="entry name" value="MenG_heptapren"/>
</dbReference>
<dbReference type="InterPro" id="IPR029063">
    <property type="entry name" value="SAM-dependent_MTases_sf"/>
</dbReference>
<dbReference type="InterPro" id="IPR004033">
    <property type="entry name" value="UbiE/COQ5_MeTrFase"/>
</dbReference>
<dbReference type="InterPro" id="IPR023576">
    <property type="entry name" value="UbiE/COQ5_MeTrFase_CS"/>
</dbReference>
<dbReference type="NCBIfam" id="TIGR02752">
    <property type="entry name" value="MenG_heptapren"/>
    <property type="match status" value="1"/>
</dbReference>
<dbReference type="NCBIfam" id="TIGR01934">
    <property type="entry name" value="MenG_MenH_UbiE"/>
    <property type="match status" value="1"/>
</dbReference>
<dbReference type="NCBIfam" id="NF001243">
    <property type="entry name" value="PRK00216.1-4"/>
    <property type="match status" value="1"/>
</dbReference>
<dbReference type="NCBIfam" id="NF001244">
    <property type="entry name" value="PRK00216.1-5"/>
    <property type="match status" value="1"/>
</dbReference>
<dbReference type="PANTHER" id="PTHR43591:SF24">
    <property type="entry name" value="2-METHOXY-6-POLYPRENYL-1,4-BENZOQUINOL METHYLASE, MITOCHONDRIAL"/>
    <property type="match status" value="1"/>
</dbReference>
<dbReference type="PANTHER" id="PTHR43591">
    <property type="entry name" value="METHYLTRANSFERASE"/>
    <property type="match status" value="1"/>
</dbReference>
<dbReference type="Pfam" id="PF01209">
    <property type="entry name" value="Ubie_methyltran"/>
    <property type="match status" value="1"/>
</dbReference>
<dbReference type="SUPFAM" id="SSF53335">
    <property type="entry name" value="S-adenosyl-L-methionine-dependent methyltransferases"/>
    <property type="match status" value="1"/>
</dbReference>
<dbReference type="PROSITE" id="PS51608">
    <property type="entry name" value="SAM_MT_UBIE"/>
    <property type="match status" value="1"/>
</dbReference>
<dbReference type="PROSITE" id="PS01183">
    <property type="entry name" value="UBIE_1"/>
    <property type="match status" value="1"/>
</dbReference>
<dbReference type="PROSITE" id="PS01184">
    <property type="entry name" value="UBIE_2"/>
    <property type="match status" value="1"/>
</dbReference>
<evidence type="ECO:0000255" key="1">
    <source>
        <dbReference type="HAMAP-Rule" id="MF_01813"/>
    </source>
</evidence>
<sequence>MQQSKEERVHDVFEKISDKYDVMNSVISFQRHKAWRKETMRIMDVKPGSKALDVCCGTADWTIALAGAVGEDGKVYGLDFSENMLAVGKQKVEALELKQVELIHGNAMELPYEDNTFDYVTIGFGLRNVPDYMQVLKEMTRVVKPGGKVICLETSQPTMIGFRQGYVLYFKYIMPLFGKMFAKSYKEYSWLQESASTFPGMKELACMFEEAGLKNVQVKPFTFGVAAMHLGIKPESK</sequence>
<protein>
    <recommendedName>
        <fullName evidence="1">Demethylmenaquinone methyltransferase</fullName>
        <ecNumber evidence="1">2.1.1.163</ecNumber>
    </recommendedName>
</protein>
<proteinExistence type="inferred from homology"/>
<gene>
    <name evidence="1" type="primary">menG</name>
    <name type="ordered locus">BcerKBAB4_1437</name>
</gene>
<reference key="1">
    <citation type="journal article" date="2008" name="Chem. Biol. Interact.">
        <title>Extending the Bacillus cereus group genomics to putative food-borne pathogens of different toxicity.</title>
        <authorList>
            <person name="Lapidus A."/>
            <person name="Goltsman E."/>
            <person name="Auger S."/>
            <person name="Galleron N."/>
            <person name="Segurens B."/>
            <person name="Dossat C."/>
            <person name="Land M.L."/>
            <person name="Broussolle V."/>
            <person name="Brillard J."/>
            <person name="Guinebretiere M.-H."/>
            <person name="Sanchis V."/>
            <person name="Nguen-the C."/>
            <person name="Lereclus D."/>
            <person name="Richardson P."/>
            <person name="Wincker P."/>
            <person name="Weissenbach J."/>
            <person name="Ehrlich S.D."/>
            <person name="Sorokin A."/>
        </authorList>
    </citation>
    <scope>NUCLEOTIDE SEQUENCE [LARGE SCALE GENOMIC DNA]</scope>
    <source>
        <strain>KBAB4</strain>
    </source>
</reference>
<feature type="chain" id="PRO_1000187733" description="Demethylmenaquinone methyltransferase">
    <location>
        <begin position="1"/>
        <end position="237"/>
    </location>
</feature>
<feature type="binding site" evidence="1">
    <location>
        <position position="58"/>
    </location>
    <ligand>
        <name>S-adenosyl-L-methionine</name>
        <dbReference type="ChEBI" id="CHEBI:59789"/>
    </ligand>
</feature>
<feature type="binding site" evidence="1">
    <location>
        <position position="79"/>
    </location>
    <ligand>
        <name>S-adenosyl-L-methionine</name>
        <dbReference type="ChEBI" id="CHEBI:59789"/>
    </ligand>
</feature>
<feature type="binding site" evidence="1">
    <location>
        <begin position="106"/>
        <end position="107"/>
    </location>
    <ligand>
        <name>S-adenosyl-L-methionine</name>
        <dbReference type="ChEBI" id="CHEBI:59789"/>
    </ligand>
</feature>
<accession>A9VMC2</accession>
<organism>
    <name type="scientific">Bacillus mycoides (strain KBAB4)</name>
    <name type="common">Bacillus weihenstephanensis</name>
    <dbReference type="NCBI Taxonomy" id="315730"/>
    <lineage>
        <taxon>Bacteria</taxon>
        <taxon>Bacillati</taxon>
        <taxon>Bacillota</taxon>
        <taxon>Bacilli</taxon>
        <taxon>Bacillales</taxon>
        <taxon>Bacillaceae</taxon>
        <taxon>Bacillus</taxon>
        <taxon>Bacillus cereus group</taxon>
    </lineage>
</organism>
<name>MENG_BACMK</name>